<sequence>MRRHAIILAAGKGTRMKSKKYKVLHEVAGKPMVEHVLESVKGSGVDQVVTIVGHGAESVKGHLGERSLYSFQEKQLGTAHAVQMAKSHLEDKEGTTIVVCGDTPLITKETLETLIAHHEDANAQATVLSASIQQPYGYGRIVRNASGRLERIVEEKDATQAEKDINEISSGIFAFNNKTLFEKLTQVKNDNAQGEYYLPDVLSLILNDGGIVEVYRTNDVEEIMGVNDRVMLSQAEKAMQRRTNHYHMLNGVTIIDPDSTFIGPDVTIGSDTVIEPGVRINGRTEIGEDVVIGQYSEINNSTIENGACIQQSVVNDASVGANTKVGPFAQLRPGAQLGADVKVGNFVEIKKADLKDGAKVSHLSYIGDAVIGERTNIGCGTITVNYDGENKFKTIVGKDSFVGCNVNLVAPVTIGDDVLVAAGSTITDDVPNDSLAVARARQTTKEGYRK</sequence>
<feature type="chain" id="PRO_0000068709" description="Bifunctional protein GlmU">
    <location>
        <begin position="1"/>
        <end position="450"/>
    </location>
</feature>
<feature type="region of interest" description="Pyrophosphorylase" evidence="1">
    <location>
        <begin position="1"/>
        <end position="229"/>
    </location>
</feature>
<feature type="region of interest" description="Linker" evidence="1">
    <location>
        <begin position="230"/>
        <end position="250"/>
    </location>
</feature>
<feature type="region of interest" description="N-acetyltransferase" evidence="1">
    <location>
        <begin position="251"/>
        <end position="450"/>
    </location>
</feature>
<feature type="active site" description="Proton acceptor" evidence="1">
    <location>
        <position position="362"/>
    </location>
</feature>
<feature type="binding site" evidence="1">
    <location>
        <begin position="8"/>
        <end position="11"/>
    </location>
    <ligand>
        <name>UDP-N-acetyl-alpha-D-glucosamine</name>
        <dbReference type="ChEBI" id="CHEBI:57705"/>
    </ligand>
</feature>
<feature type="binding site" evidence="1">
    <location>
        <position position="22"/>
    </location>
    <ligand>
        <name>UDP-N-acetyl-alpha-D-glucosamine</name>
        <dbReference type="ChEBI" id="CHEBI:57705"/>
    </ligand>
</feature>
<feature type="binding site" evidence="1">
    <location>
        <position position="72"/>
    </location>
    <ligand>
        <name>UDP-N-acetyl-alpha-D-glucosamine</name>
        <dbReference type="ChEBI" id="CHEBI:57705"/>
    </ligand>
</feature>
<feature type="binding site" evidence="1">
    <location>
        <begin position="77"/>
        <end position="78"/>
    </location>
    <ligand>
        <name>UDP-N-acetyl-alpha-D-glucosamine</name>
        <dbReference type="ChEBI" id="CHEBI:57705"/>
    </ligand>
</feature>
<feature type="binding site" evidence="1">
    <location>
        <position position="102"/>
    </location>
    <ligand>
        <name>Mg(2+)</name>
        <dbReference type="ChEBI" id="CHEBI:18420"/>
    </ligand>
</feature>
<feature type="binding site" evidence="1">
    <location>
        <position position="139"/>
    </location>
    <ligand>
        <name>UDP-N-acetyl-alpha-D-glucosamine</name>
        <dbReference type="ChEBI" id="CHEBI:57705"/>
    </ligand>
</feature>
<feature type="binding site" evidence="1">
    <location>
        <position position="154"/>
    </location>
    <ligand>
        <name>UDP-N-acetyl-alpha-D-glucosamine</name>
        <dbReference type="ChEBI" id="CHEBI:57705"/>
    </ligand>
</feature>
<feature type="binding site" evidence="1">
    <location>
        <position position="227"/>
    </location>
    <ligand>
        <name>Mg(2+)</name>
        <dbReference type="ChEBI" id="CHEBI:18420"/>
    </ligand>
</feature>
<feature type="binding site" evidence="1">
    <location>
        <position position="227"/>
    </location>
    <ligand>
        <name>UDP-N-acetyl-alpha-D-glucosamine</name>
        <dbReference type="ChEBI" id="CHEBI:57705"/>
    </ligand>
</feature>
<feature type="binding site" evidence="1">
    <location>
        <position position="332"/>
    </location>
    <ligand>
        <name>UDP-N-acetyl-alpha-D-glucosamine</name>
        <dbReference type="ChEBI" id="CHEBI:57705"/>
    </ligand>
</feature>
<feature type="binding site" evidence="1">
    <location>
        <position position="350"/>
    </location>
    <ligand>
        <name>UDP-N-acetyl-alpha-D-glucosamine</name>
        <dbReference type="ChEBI" id="CHEBI:57705"/>
    </ligand>
</feature>
<feature type="binding site" evidence="1">
    <location>
        <position position="365"/>
    </location>
    <ligand>
        <name>UDP-N-acetyl-alpha-D-glucosamine</name>
        <dbReference type="ChEBI" id="CHEBI:57705"/>
    </ligand>
</feature>
<feature type="binding site" evidence="1">
    <location>
        <position position="376"/>
    </location>
    <ligand>
        <name>UDP-N-acetyl-alpha-D-glucosamine</name>
        <dbReference type="ChEBI" id="CHEBI:57705"/>
    </ligand>
</feature>
<feature type="binding site" evidence="1">
    <location>
        <begin position="385"/>
        <end position="386"/>
    </location>
    <ligand>
        <name>acetyl-CoA</name>
        <dbReference type="ChEBI" id="CHEBI:57288"/>
    </ligand>
</feature>
<feature type="binding site" evidence="1">
    <location>
        <position position="422"/>
    </location>
    <ligand>
        <name>acetyl-CoA</name>
        <dbReference type="ChEBI" id="CHEBI:57288"/>
    </ligand>
</feature>
<feature type="binding site" evidence="1">
    <location>
        <position position="439"/>
    </location>
    <ligand>
        <name>acetyl-CoA</name>
        <dbReference type="ChEBI" id="CHEBI:57288"/>
    </ligand>
</feature>
<organism>
    <name type="scientific">Staphylococcus aureus (strain Mu50 / ATCC 700699)</name>
    <dbReference type="NCBI Taxonomy" id="158878"/>
    <lineage>
        <taxon>Bacteria</taxon>
        <taxon>Bacillati</taxon>
        <taxon>Bacillota</taxon>
        <taxon>Bacilli</taxon>
        <taxon>Bacillales</taxon>
        <taxon>Staphylococcaceae</taxon>
        <taxon>Staphylococcus</taxon>
    </lineage>
</organism>
<dbReference type="EC" id="2.7.7.23" evidence="1"/>
<dbReference type="EC" id="2.3.1.157" evidence="1"/>
<dbReference type="EMBL" id="BA000017">
    <property type="protein sequence ID" value="BAB56661.1"/>
    <property type="molecule type" value="Genomic_DNA"/>
</dbReference>
<dbReference type="RefSeq" id="WP_001252543.1">
    <property type="nucleotide sequence ID" value="NC_002758.2"/>
</dbReference>
<dbReference type="SMR" id="Q99WA4"/>
<dbReference type="KEGG" id="sav:SAV0499"/>
<dbReference type="HOGENOM" id="CLU_029499_15_2_9"/>
<dbReference type="PhylomeDB" id="Q99WA4"/>
<dbReference type="UniPathway" id="UPA00113">
    <property type="reaction ID" value="UER00532"/>
</dbReference>
<dbReference type="UniPathway" id="UPA00113">
    <property type="reaction ID" value="UER00533"/>
</dbReference>
<dbReference type="UniPathway" id="UPA00973"/>
<dbReference type="Proteomes" id="UP000002481">
    <property type="component" value="Chromosome"/>
</dbReference>
<dbReference type="GO" id="GO:0005737">
    <property type="term" value="C:cytoplasm"/>
    <property type="evidence" value="ECO:0007669"/>
    <property type="project" value="UniProtKB-SubCell"/>
</dbReference>
<dbReference type="GO" id="GO:0016020">
    <property type="term" value="C:membrane"/>
    <property type="evidence" value="ECO:0007669"/>
    <property type="project" value="GOC"/>
</dbReference>
<dbReference type="GO" id="GO:0019134">
    <property type="term" value="F:glucosamine-1-phosphate N-acetyltransferase activity"/>
    <property type="evidence" value="ECO:0007669"/>
    <property type="project" value="UniProtKB-UniRule"/>
</dbReference>
<dbReference type="GO" id="GO:0000287">
    <property type="term" value="F:magnesium ion binding"/>
    <property type="evidence" value="ECO:0007669"/>
    <property type="project" value="UniProtKB-UniRule"/>
</dbReference>
<dbReference type="GO" id="GO:0003977">
    <property type="term" value="F:UDP-N-acetylglucosamine diphosphorylase activity"/>
    <property type="evidence" value="ECO:0007669"/>
    <property type="project" value="UniProtKB-UniRule"/>
</dbReference>
<dbReference type="GO" id="GO:0000902">
    <property type="term" value="P:cell morphogenesis"/>
    <property type="evidence" value="ECO:0007669"/>
    <property type="project" value="UniProtKB-UniRule"/>
</dbReference>
<dbReference type="GO" id="GO:0071555">
    <property type="term" value="P:cell wall organization"/>
    <property type="evidence" value="ECO:0007669"/>
    <property type="project" value="UniProtKB-KW"/>
</dbReference>
<dbReference type="GO" id="GO:0009245">
    <property type="term" value="P:lipid A biosynthetic process"/>
    <property type="evidence" value="ECO:0007669"/>
    <property type="project" value="UniProtKB-UniRule"/>
</dbReference>
<dbReference type="GO" id="GO:0009252">
    <property type="term" value="P:peptidoglycan biosynthetic process"/>
    <property type="evidence" value="ECO:0007669"/>
    <property type="project" value="UniProtKB-UniRule"/>
</dbReference>
<dbReference type="GO" id="GO:0008360">
    <property type="term" value="P:regulation of cell shape"/>
    <property type="evidence" value="ECO:0007669"/>
    <property type="project" value="UniProtKB-KW"/>
</dbReference>
<dbReference type="GO" id="GO:0006048">
    <property type="term" value="P:UDP-N-acetylglucosamine biosynthetic process"/>
    <property type="evidence" value="ECO:0007669"/>
    <property type="project" value="UniProtKB-UniPathway"/>
</dbReference>
<dbReference type="CDD" id="cd02540">
    <property type="entry name" value="GT2_GlmU_N_bac"/>
    <property type="match status" value="1"/>
</dbReference>
<dbReference type="CDD" id="cd03353">
    <property type="entry name" value="LbH_GlmU_C"/>
    <property type="match status" value="1"/>
</dbReference>
<dbReference type="Gene3D" id="2.160.10.10">
    <property type="entry name" value="Hexapeptide repeat proteins"/>
    <property type="match status" value="1"/>
</dbReference>
<dbReference type="Gene3D" id="3.90.550.10">
    <property type="entry name" value="Spore Coat Polysaccharide Biosynthesis Protein SpsA, Chain A"/>
    <property type="match status" value="1"/>
</dbReference>
<dbReference type="HAMAP" id="MF_01631">
    <property type="entry name" value="GlmU"/>
    <property type="match status" value="1"/>
</dbReference>
<dbReference type="InterPro" id="IPR005882">
    <property type="entry name" value="Bifunctional_GlmU"/>
</dbReference>
<dbReference type="InterPro" id="IPR050065">
    <property type="entry name" value="GlmU-like"/>
</dbReference>
<dbReference type="InterPro" id="IPR038009">
    <property type="entry name" value="GlmU_C_LbH"/>
</dbReference>
<dbReference type="InterPro" id="IPR001451">
    <property type="entry name" value="Hexapep"/>
</dbReference>
<dbReference type="InterPro" id="IPR018357">
    <property type="entry name" value="Hexapep_transf_CS"/>
</dbReference>
<dbReference type="InterPro" id="IPR005835">
    <property type="entry name" value="NTP_transferase_dom"/>
</dbReference>
<dbReference type="InterPro" id="IPR029044">
    <property type="entry name" value="Nucleotide-diphossugar_trans"/>
</dbReference>
<dbReference type="InterPro" id="IPR011004">
    <property type="entry name" value="Trimer_LpxA-like_sf"/>
</dbReference>
<dbReference type="NCBIfam" id="TIGR01173">
    <property type="entry name" value="glmU"/>
    <property type="match status" value="1"/>
</dbReference>
<dbReference type="NCBIfam" id="NF010934">
    <property type="entry name" value="PRK14354.1"/>
    <property type="match status" value="1"/>
</dbReference>
<dbReference type="PANTHER" id="PTHR43584:SF3">
    <property type="entry name" value="BIFUNCTIONAL PROTEIN GLMU"/>
    <property type="match status" value="1"/>
</dbReference>
<dbReference type="PANTHER" id="PTHR43584">
    <property type="entry name" value="NUCLEOTIDYL TRANSFERASE"/>
    <property type="match status" value="1"/>
</dbReference>
<dbReference type="Pfam" id="PF00132">
    <property type="entry name" value="Hexapep"/>
    <property type="match status" value="2"/>
</dbReference>
<dbReference type="Pfam" id="PF00483">
    <property type="entry name" value="NTP_transferase"/>
    <property type="match status" value="1"/>
</dbReference>
<dbReference type="SUPFAM" id="SSF53448">
    <property type="entry name" value="Nucleotide-diphospho-sugar transferases"/>
    <property type="match status" value="1"/>
</dbReference>
<dbReference type="SUPFAM" id="SSF51161">
    <property type="entry name" value="Trimeric LpxA-like enzymes"/>
    <property type="match status" value="1"/>
</dbReference>
<dbReference type="PROSITE" id="PS00101">
    <property type="entry name" value="HEXAPEP_TRANSFERASES"/>
    <property type="match status" value="1"/>
</dbReference>
<comment type="function">
    <text evidence="1">Catalyzes the last two sequential reactions in the de novo biosynthetic pathway for UDP-N-acetylglucosamine (UDP-GlcNAc). The C-terminal domain catalyzes the transfer of acetyl group from acetyl coenzyme A to glucosamine-1-phosphate (GlcN-1-P) to produce N-acetylglucosamine-1-phosphate (GlcNAc-1-P), which is converted into UDP-GlcNAc by the transfer of uridine 5-monophosphate (from uridine 5-triphosphate), a reaction catalyzed by the N-terminal domain.</text>
</comment>
<comment type="catalytic activity">
    <reaction evidence="1">
        <text>alpha-D-glucosamine 1-phosphate + acetyl-CoA = N-acetyl-alpha-D-glucosamine 1-phosphate + CoA + H(+)</text>
        <dbReference type="Rhea" id="RHEA:13725"/>
        <dbReference type="ChEBI" id="CHEBI:15378"/>
        <dbReference type="ChEBI" id="CHEBI:57287"/>
        <dbReference type="ChEBI" id="CHEBI:57288"/>
        <dbReference type="ChEBI" id="CHEBI:57776"/>
        <dbReference type="ChEBI" id="CHEBI:58516"/>
        <dbReference type="EC" id="2.3.1.157"/>
    </reaction>
</comment>
<comment type="catalytic activity">
    <reaction evidence="1">
        <text>N-acetyl-alpha-D-glucosamine 1-phosphate + UTP + H(+) = UDP-N-acetyl-alpha-D-glucosamine + diphosphate</text>
        <dbReference type="Rhea" id="RHEA:13509"/>
        <dbReference type="ChEBI" id="CHEBI:15378"/>
        <dbReference type="ChEBI" id="CHEBI:33019"/>
        <dbReference type="ChEBI" id="CHEBI:46398"/>
        <dbReference type="ChEBI" id="CHEBI:57705"/>
        <dbReference type="ChEBI" id="CHEBI:57776"/>
        <dbReference type="EC" id="2.7.7.23"/>
    </reaction>
</comment>
<comment type="cofactor">
    <cofactor evidence="1">
        <name>Mg(2+)</name>
        <dbReference type="ChEBI" id="CHEBI:18420"/>
    </cofactor>
    <text evidence="1">Binds 1 Mg(2+) ion per subunit.</text>
</comment>
<comment type="pathway">
    <text evidence="1">Nucleotide-sugar biosynthesis; UDP-N-acetyl-alpha-D-glucosamine biosynthesis; N-acetyl-alpha-D-glucosamine 1-phosphate from alpha-D-glucosamine 6-phosphate (route II): step 2/2.</text>
</comment>
<comment type="pathway">
    <text evidence="1">Nucleotide-sugar biosynthesis; UDP-N-acetyl-alpha-D-glucosamine biosynthesis; UDP-N-acetyl-alpha-D-glucosamine from N-acetyl-alpha-D-glucosamine 1-phosphate: step 1/1.</text>
</comment>
<comment type="pathway">
    <text evidence="1">Bacterial outer membrane biogenesis; LPS lipid A biosynthesis.</text>
</comment>
<comment type="subunit">
    <text evidence="1">Homotrimer.</text>
</comment>
<comment type="subcellular location">
    <subcellularLocation>
        <location evidence="1">Cytoplasm</location>
    </subcellularLocation>
</comment>
<comment type="similarity">
    <text evidence="1">In the N-terminal section; belongs to the N-acetylglucosamine-1-phosphate uridyltransferase family.</text>
</comment>
<comment type="similarity">
    <text evidence="1">In the C-terminal section; belongs to the transferase hexapeptide repeat family.</text>
</comment>
<keyword id="KW-0012">Acyltransferase</keyword>
<keyword id="KW-0133">Cell shape</keyword>
<keyword id="KW-0961">Cell wall biogenesis/degradation</keyword>
<keyword id="KW-0963">Cytoplasm</keyword>
<keyword id="KW-0460">Magnesium</keyword>
<keyword id="KW-0479">Metal-binding</keyword>
<keyword id="KW-0511">Multifunctional enzyme</keyword>
<keyword id="KW-0548">Nucleotidyltransferase</keyword>
<keyword id="KW-0573">Peptidoglycan synthesis</keyword>
<keyword id="KW-0677">Repeat</keyword>
<keyword id="KW-0808">Transferase</keyword>
<gene>
    <name evidence="1" type="primary">glmU</name>
    <name type="synonym">gcaD</name>
    <name type="ordered locus">SAV0499</name>
</gene>
<proteinExistence type="inferred from homology"/>
<name>GLMU_STAAM</name>
<protein>
    <recommendedName>
        <fullName evidence="1">Bifunctional protein GlmU</fullName>
    </recommendedName>
    <domain>
        <recommendedName>
            <fullName evidence="1">UDP-N-acetylglucosamine pyrophosphorylase</fullName>
            <ecNumber evidence="1">2.7.7.23</ecNumber>
        </recommendedName>
        <alternativeName>
            <fullName evidence="1">N-acetylglucosamine-1-phosphate uridyltransferase</fullName>
        </alternativeName>
    </domain>
    <domain>
        <recommendedName>
            <fullName evidence="1">Glucosamine-1-phosphate N-acetyltransferase</fullName>
            <ecNumber evidence="1">2.3.1.157</ecNumber>
        </recommendedName>
    </domain>
</protein>
<accession>Q99WA4</accession>
<evidence type="ECO:0000255" key="1">
    <source>
        <dbReference type="HAMAP-Rule" id="MF_01631"/>
    </source>
</evidence>
<reference key="1">
    <citation type="journal article" date="2001" name="Lancet">
        <title>Whole genome sequencing of meticillin-resistant Staphylococcus aureus.</title>
        <authorList>
            <person name="Kuroda M."/>
            <person name="Ohta T."/>
            <person name="Uchiyama I."/>
            <person name="Baba T."/>
            <person name="Yuzawa H."/>
            <person name="Kobayashi I."/>
            <person name="Cui L."/>
            <person name="Oguchi A."/>
            <person name="Aoki K."/>
            <person name="Nagai Y."/>
            <person name="Lian J.-Q."/>
            <person name="Ito T."/>
            <person name="Kanamori M."/>
            <person name="Matsumaru H."/>
            <person name="Maruyama A."/>
            <person name="Murakami H."/>
            <person name="Hosoyama A."/>
            <person name="Mizutani-Ui Y."/>
            <person name="Takahashi N.K."/>
            <person name="Sawano T."/>
            <person name="Inoue R."/>
            <person name="Kaito C."/>
            <person name="Sekimizu K."/>
            <person name="Hirakawa H."/>
            <person name="Kuhara S."/>
            <person name="Goto S."/>
            <person name="Yabuzaki J."/>
            <person name="Kanehisa M."/>
            <person name="Yamashita A."/>
            <person name="Oshima K."/>
            <person name="Furuya K."/>
            <person name="Yoshino C."/>
            <person name="Shiba T."/>
            <person name="Hattori M."/>
            <person name="Ogasawara N."/>
            <person name="Hayashi H."/>
            <person name="Hiramatsu K."/>
        </authorList>
    </citation>
    <scope>NUCLEOTIDE SEQUENCE [LARGE SCALE GENOMIC DNA]</scope>
    <source>
        <strain>Mu50 / ATCC 700699</strain>
    </source>
</reference>